<sequence>MNIVAPQLTPVVTTGSLPASTKIVKPGTLYPDLRVPMREISLHPTSGEPPVTVYDSSGPYTDPAHVISIDAGLPRLRESWIKARGDVESYDGRIVKPEDNGFATGERLTPEFPVRNTPLKAKAGRAVTQLAYARAGIVTPEMEFIAIRENLGRQAAKEALARDGESFGAHVPDFVTPEFVRREVAEGRAIIPANINHPESEPMIIGRNFLVKINANIGNSAVTSSMAEEVEKMVWAIRWGADTVMDLSTGRNIHNIREWIIRNSPVPIGTVPLYQALEKVNGIAEDLTWEVYRDTLIEQAEQGVDYFTIHAGVRLAYIPLTVNRVTGIVSRGGSIMAKWCLHHHKESFLYEHFEEICDICRAYDVSFSLGDGLRPGSIADANDAAQFAELETLGELTKIAWAKDCQVMIEGPGHVPMHKIKENMDKQLEVCGEAPFYTLGPLTTDIAPGYDHITSGIGAAMIGWFGTAMLCYVTPKEHLGLPDRSDVKTGVITYKIAAHAADLAKGHPAARIRDDALSRARFEFRWEDQFNLSLDPDTARSFHDETLPKEAHKVAHFCSMCGPKFCSMRISHDIRAEAQKEGLEAMAAKYRDGGDLYMPVAEVAKTPAGE</sequence>
<geneLocation type="plasmid">
    <name>p42b</name>
</geneLocation>
<feature type="chain" id="PRO_0000242294" description="Phosphomethylpyrimidine synthase">
    <location>
        <begin position="1"/>
        <end position="610"/>
    </location>
</feature>
<feature type="binding site" evidence="1">
    <location>
        <position position="216"/>
    </location>
    <ligand>
        <name>substrate</name>
    </ligand>
</feature>
<feature type="binding site" evidence="1">
    <location>
        <position position="245"/>
    </location>
    <ligand>
        <name>substrate</name>
    </ligand>
</feature>
<feature type="binding site" evidence="1">
    <location>
        <position position="274"/>
    </location>
    <ligand>
        <name>substrate</name>
    </ligand>
</feature>
<feature type="binding site" evidence="1">
    <location>
        <position position="310"/>
    </location>
    <ligand>
        <name>substrate</name>
    </ligand>
</feature>
<feature type="binding site" evidence="1">
    <location>
        <begin position="330"/>
        <end position="332"/>
    </location>
    <ligand>
        <name>substrate</name>
    </ligand>
</feature>
<feature type="binding site" evidence="1">
    <location>
        <begin position="371"/>
        <end position="374"/>
    </location>
    <ligand>
        <name>substrate</name>
    </ligand>
</feature>
<feature type="binding site" evidence="1">
    <location>
        <position position="410"/>
    </location>
    <ligand>
        <name>substrate</name>
    </ligand>
</feature>
<feature type="binding site" evidence="1">
    <location>
        <position position="414"/>
    </location>
    <ligand>
        <name>Zn(2+)</name>
        <dbReference type="ChEBI" id="CHEBI:29105"/>
    </ligand>
</feature>
<feature type="binding site" evidence="1">
    <location>
        <position position="437"/>
    </location>
    <ligand>
        <name>substrate</name>
    </ligand>
</feature>
<feature type="binding site" evidence="1">
    <location>
        <position position="478"/>
    </location>
    <ligand>
        <name>Zn(2+)</name>
        <dbReference type="ChEBI" id="CHEBI:29105"/>
    </ligand>
</feature>
<feature type="binding site" evidence="1">
    <location>
        <position position="558"/>
    </location>
    <ligand>
        <name>[4Fe-4S] cluster</name>
        <dbReference type="ChEBI" id="CHEBI:49883"/>
        <note>4Fe-4S-S-AdoMet</note>
    </ligand>
</feature>
<feature type="binding site" evidence="1">
    <location>
        <position position="561"/>
    </location>
    <ligand>
        <name>[4Fe-4S] cluster</name>
        <dbReference type="ChEBI" id="CHEBI:49883"/>
        <note>4Fe-4S-S-AdoMet</note>
    </ligand>
</feature>
<feature type="binding site" evidence="1">
    <location>
        <position position="566"/>
    </location>
    <ligand>
        <name>[4Fe-4S] cluster</name>
        <dbReference type="ChEBI" id="CHEBI:49883"/>
        <note>4Fe-4S-S-AdoMet</note>
    </ligand>
</feature>
<feature type="sequence conflict" description="In Ref. 1; AAC45972." evidence="2" ref="1">
    <original>AK</original>
    <variation>PT</variation>
    <location>
        <begin position="337"/>
        <end position="338"/>
    </location>
</feature>
<feature type="sequence conflict" description="In Ref. 1; AAC45972." evidence="2" ref="1">
    <original>A</original>
    <variation>G</variation>
    <location>
        <position position="434"/>
    </location>
</feature>
<reference key="1">
    <citation type="journal article" date="1997" name="J. Bacteriol.">
        <title>Expression of thiamin biosynthetic genes (thiCOGE) and production of symbiotic terminal oxidase cbb3 in Rhizobium etli.</title>
        <authorList>
            <person name="Miranda-Rios J."/>
            <person name="Morera C."/>
            <person name="Taboada H."/>
            <person name="Davalos A."/>
            <person name="Encarnacion S."/>
            <person name="Mora J."/>
            <person name="Soberon M."/>
        </authorList>
    </citation>
    <scope>NUCLEOTIDE SEQUENCE [GENOMIC DNA]</scope>
    <source>
        <strain>CE3</strain>
    </source>
</reference>
<reference key="2">
    <citation type="journal article" date="2006" name="Proc. Natl. Acad. Sci. U.S.A.">
        <title>The partitioned Rhizobium etli genome: genetic and metabolic redundancy in seven interacting replicons.</title>
        <authorList>
            <person name="Gonzalez V."/>
            <person name="Santamaria R.I."/>
            <person name="Bustos P."/>
            <person name="Hernandez-Gonzalez I."/>
            <person name="Medrano-Soto A."/>
            <person name="Moreno-Hagelsieb G."/>
            <person name="Janga S.C."/>
            <person name="Ramirez M.A."/>
            <person name="Jimenez-Jacinto V."/>
            <person name="Collado-Vides J."/>
            <person name="Davila G."/>
        </authorList>
    </citation>
    <scope>NUCLEOTIDE SEQUENCE [LARGE SCALE GENOMIC DNA]</scope>
    <source>
        <strain>ATCC 51251 / DSM 11541 / JCM 21823 / NBRC 15573 / CFN 42</strain>
    </source>
</reference>
<evidence type="ECO:0000255" key="1">
    <source>
        <dbReference type="HAMAP-Rule" id="MF_00089"/>
    </source>
</evidence>
<evidence type="ECO:0000305" key="2"/>
<comment type="function">
    <text evidence="1">Catalyzes the synthesis of the hydroxymethylpyrimidine phosphate (HMP-P) moiety of thiamine from aminoimidazole ribotide (AIR) in a radical S-adenosyl-L-methionine (SAM)-dependent reaction.</text>
</comment>
<comment type="catalytic activity">
    <reaction evidence="1">
        <text>5-amino-1-(5-phospho-beta-D-ribosyl)imidazole + S-adenosyl-L-methionine = 4-amino-2-methyl-5-(phosphooxymethyl)pyrimidine + CO + 5'-deoxyadenosine + formate + L-methionine + 3 H(+)</text>
        <dbReference type="Rhea" id="RHEA:24840"/>
        <dbReference type="ChEBI" id="CHEBI:15378"/>
        <dbReference type="ChEBI" id="CHEBI:15740"/>
        <dbReference type="ChEBI" id="CHEBI:17245"/>
        <dbReference type="ChEBI" id="CHEBI:17319"/>
        <dbReference type="ChEBI" id="CHEBI:57844"/>
        <dbReference type="ChEBI" id="CHEBI:58354"/>
        <dbReference type="ChEBI" id="CHEBI:59789"/>
        <dbReference type="ChEBI" id="CHEBI:137981"/>
        <dbReference type="EC" id="4.1.99.17"/>
    </reaction>
</comment>
<comment type="cofactor">
    <cofactor evidence="1">
        <name>[4Fe-4S] cluster</name>
        <dbReference type="ChEBI" id="CHEBI:49883"/>
    </cofactor>
    <text evidence="1">Binds 1 [4Fe-4S] cluster per subunit. The cluster is coordinated with 3 cysteines and an exchangeable S-adenosyl-L-methionine.</text>
</comment>
<comment type="pathway">
    <text evidence="1">Cofactor biosynthesis; thiamine diphosphate biosynthesis.</text>
</comment>
<comment type="subunit">
    <text evidence="1">Homodimer.</text>
</comment>
<comment type="similarity">
    <text evidence="1">Belongs to the ThiC family.</text>
</comment>
<proteinExistence type="inferred from homology"/>
<protein>
    <recommendedName>
        <fullName evidence="1">Phosphomethylpyrimidine synthase</fullName>
        <ecNumber evidence="1">4.1.99.17</ecNumber>
    </recommendedName>
    <alternativeName>
        <fullName evidence="1">Hydroxymethylpyrimidine phosphate synthase</fullName>
        <shortName evidence="1">HMP-P synthase</shortName>
        <shortName evidence="1">HMP-phosphate synthase</shortName>
        <shortName evidence="1">HMPP synthase</shortName>
    </alternativeName>
    <alternativeName>
        <fullName evidence="1">Thiamine biosynthesis protein ThiC</fullName>
    </alternativeName>
</protein>
<accession>Q2K206</accession>
<accession>O34291</accession>
<organism>
    <name type="scientific">Rhizobium etli (strain ATCC 51251 / DSM 11541 / JCM 21823 / NBRC 15573 / CFN 42)</name>
    <dbReference type="NCBI Taxonomy" id="347834"/>
    <lineage>
        <taxon>Bacteria</taxon>
        <taxon>Pseudomonadati</taxon>
        <taxon>Pseudomonadota</taxon>
        <taxon>Alphaproteobacteria</taxon>
        <taxon>Hyphomicrobiales</taxon>
        <taxon>Rhizobiaceae</taxon>
        <taxon>Rhizobium/Agrobacterium group</taxon>
        <taxon>Rhizobium</taxon>
    </lineage>
</organism>
<keyword id="KW-0004">4Fe-4S</keyword>
<keyword id="KW-0408">Iron</keyword>
<keyword id="KW-0411">Iron-sulfur</keyword>
<keyword id="KW-0456">Lyase</keyword>
<keyword id="KW-0479">Metal-binding</keyword>
<keyword id="KW-0614">Plasmid</keyword>
<keyword id="KW-1185">Reference proteome</keyword>
<keyword id="KW-0949">S-adenosyl-L-methionine</keyword>
<keyword id="KW-0784">Thiamine biosynthesis</keyword>
<keyword id="KW-0862">Zinc</keyword>
<gene>
    <name evidence="1" type="primary">thiC</name>
    <name type="ordered locus">RHE_PB00082</name>
</gene>
<dbReference type="EC" id="4.1.99.17" evidence="1"/>
<dbReference type="EMBL" id="AF004408">
    <property type="protein sequence ID" value="AAC45972.1"/>
    <property type="molecule type" value="Genomic_DNA"/>
</dbReference>
<dbReference type="EMBL" id="CP000135">
    <property type="protein sequence ID" value="ABC93124.1"/>
    <property type="molecule type" value="Genomic_DNA"/>
</dbReference>
<dbReference type="PIR" id="T44254">
    <property type="entry name" value="T44254"/>
</dbReference>
<dbReference type="RefSeq" id="WP_011427546.1">
    <property type="nucleotide sequence ID" value="NC_007763.1"/>
</dbReference>
<dbReference type="SMR" id="Q2K206"/>
<dbReference type="KEGG" id="ret:RHE_PB00082"/>
<dbReference type="HOGENOM" id="CLU_013181_2_1_5"/>
<dbReference type="OrthoDB" id="9805897at2"/>
<dbReference type="UniPathway" id="UPA00060"/>
<dbReference type="Proteomes" id="UP000001936">
    <property type="component" value="Plasmid p42b"/>
</dbReference>
<dbReference type="GO" id="GO:0005829">
    <property type="term" value="C:cytosol"/>
    <property type="evidence" value="ECO:0007669"/>
    <property type="project" value="TreeGrafter"/>
</dbReference>
<dbReference type="GO" id="GO:0051539">
    <property type="term" value="F:4 iron, 4 sulfur cluster binding"/>
    <property type="evidence" value="ECO:0007669"/>
    <property type="project" value="UniProtKB-KW"/>
</dbReference>
<dbReference type="GO" id="GO:0016830">
    <property type="term" value="F:carbon-carbon lyase activity"/>
    <property type="evidence" value="ECO:0007669"/>
    <property type="project" value="InterPro"/>
</dbReference>
<dbReference type="GO" id="GO:0008270">
    <property type="term" value="F:zinc ion binding"/>
    <property type="evidence" value="ECO:0007669"/>
    <property type="project" value="UniProtKB-UniRule"/>
</dbReference>
<dbReference type="GO" id="GO:0009228">
    <property type="term" value="P:thiamine biosynthetic process"/>
    <property type="evidence" value="ECO:0007669"/>
    <property type="project" value="UniProtKB-KW"/>
</dbReference>
<dbReference type="GO" id="GO:0009229">
    <property type="term" value="P:thiamine diphosphate biosynthetic process"/>
    <property type="evidence" value="ECO:0007669"/>
    <property type="project" value="UniProtKB-UniRule"/>
</dbReference>
<dbReference type="FunFam" id="3.20.20.540:FF:000001">
    <property type="entry name" value="Phosphomethylpyrimidine synthase"/>
    <property type="match status" value="1"/>
</dbReference>
<dbReference type="Gene3D" id="6.10.250.620">
    <property type="match status" value="1"/>
</dbReference>
<dbReference type="Gene3D" id="3.20.20.540">
    <property type="entry name" value="Radical SAM ThiC family, central domain"/>
    <property type="match status" value="1"/>
</dbReference>
<dbReference type="HAMAP" id="MF_00089">
    <property type="entry name" value="ThiC"/>
    <property type="match status" value="1"/>
</dbReference>
<dbReference type="InterPro" id="IPR037509">
    <property type="entry name" value="ThiC"/>
</dbReference>
<dbReference type="InterPro" id="IPR025747">
    <property type="entry name" value="ThiC-associated_dom"/>
</dbReference>
<dbReference type="InterPro" id="IPR038521">
    <property type="entry name" value="ThiC/Bza_core_dom"/>
</dbReference>
<dbReference type="InterPro" id="IPR002817">
    <property type="entry name" value="ThiC/BzaA/B"/>
</dbReference>
<dbReference type="NCBIfam" id="NF006763">
    <property type="entry name" value="PRK09284.1"/>
    <property type="match status" value="1"/>
</dbReference>
<dbReference type="NCBIfam" id="NF009895">
    <property type="entry name" value="PRK13352.1"/>
    <property type="match status" value="1"/>
</dbReference>
<dbReference type="NCBIfam" id="TIGR00190">
    <property type="entry name" value="thiC"/>
    <property type="match status" value="1"/>
</dbReference>
<dbReference type="PANTHER" id="PTHR30557:SF1">
    <property type="entry name" value="PHOSPHOMETHYLPYRIMIDINE SYNTHASE, CHLOROPLASTIC"/>
    <property type="match status" value="1"/>
</dbReference>
<dbReference type="PANTHER" id="PTHR30557">
    <property type="entry name" value="THIAMINE BIOSYNTHESIS PROTEIN THIC"/>
    <property type="match status" value="1"/>
</dbReference>
<dbReference type="Pfam" id="PF13667">
    <property type="entry name" value="ThiC-associated"/>
    <property type="match status" value="1"/>
</dbReference>
<dbReference type="Pfam" id="PF01964">
    <property type="entry name" value="ThiC_Rad_SAM"/>
    <property type="match status" value="1"/>
</dbReference>
<dbReference type="SFLD" id="SFLDF00407">
    <property type="entry name" value="phosphomethylpyrimidine_syntha"/>
    <property type="match status" value="1"/>
</dbReference>
<dbReference type="SFLD" id="SFLDG01114">
    <property type="entry name" value="phosphomethylpyrimidine_syntha"/>
    <property type="match status" value="1"/>
</dbReference>
<dbReference type="SFLD" id="SFLDS00113">
    <property type="entry name" value="Radical_SAM_Phosphomethylpyrim"/>
    <property type="match status" value="1"/>
</dbReference>
<name>THIC_RHIEC</name>